<gene>
    <name evidence="4" type="primary">RTRAF</name>
</gene>
<feature type="chain" id="PRO_0000089957" description="RNA transcription, translation and transport factor protein">
    <location>
        <begin position="1"/>
        <end position="244"/>
    </location>
</feature>
<feature type="modified residue" description="N6-acetyllysine" evidence="2">
    <location>
        <position position="20"/>
    </location>
</feature>
<feature type="modified residue" description="N6-acetyllysine" evidence="2">
    <location>
        <position position="62"/>
    </location>
</feature>
<feature type="modified residue" description="N6-acetyllysine" evidence="2">
    <location>
        <position position="98"/>
    </location>
</feature>
<keyword id="KW-0007">Acetylation</keyword>
<keyword id="KW-0963">Cytoplasm</keyword>
<keyword id="KW-0206">Cytoskeleton</keyword>
<keyword id="KW-0539">Nucleus</keyword>
<keyword id="KW-1185">Reference proteome</keyword>
<keyword id="KW-0694">RNA-binding</keyword>
<keyword id="KW-0804">Transcription</keyword>
<keyword id="KW-0805">Transcription regulation</keyword>
<evidence type="ECO:0000250" key="1"/>
<evidence type="ECO:0000250" key="2">
    <source>
        <dbReference type="UniProtKB" id="Q9Y224"/>
    </source>
</evidence>
<evidence type="ECO:0000305" key="3"/>
<evidence type="ECO:0000312" key="4">
    <source>
        <dbReference type="MGI" id="MGI:1915295"/>
    </source>
</evidence>
<sequence>MFRRKLTALDYHNPSGFNCKDETEFRNFIVWLEDQKIRHYKIEDRGNLRNIHSSDWPKFFEKYLKDVNCPFKIQDRQEAIDWLLGLAVRLEYGDNAEKYKDLVPDNRKNTDNAAKNAEPLINLDVNNPDFKAGVMALANLLQIQRHDDYLVMLKAIRILVQERLTQDAVAKANQTKEGLPVALEKHILGFDTGDAVLNEAAQILRLLHIEELRELQTKINEAIVAVQAIIADPKTDHRLGKVGR</sequence>
<organism>
    <name type="scientific">Mus musculus</name>
    <name type="common">Mouse</name>
    <dbReference type="NCBI Taxonomy" id="10090"/>
    <lineage>
        <taxon>Eukaryota</taxon>
        <taxon>Metazoa</taxon>
        <taxon>Chordata</taxon>
        <taxon>Craniata</taxon>
        <taxon>Vertebrata</taxon>
        <taxon>Euteleostomi</taxon>
        <taxon>Mammalia</taxon>
        <taxon>Eutheria</taxon>
        <taxon>Euarchontoglires</taxon>
        <taxon>Glires</taxon>
        <taxon>Rodentia</taxon>
        <taxon>Myomorpha</taxon>
        <taxon>Muroidea</taxon>
        <taxon>Muridae</taxon>
        <taxon>Murinae</taxon>
        <taxon>Mus</taxon>
        <taxon>Mus</taxon>
    </lineage>
</organism>
<reference key="1">
    <citation type="journal article" date="2005" name="Science">
        <title>The transcriptional landscape of the mammalian genome.</title>
        <authorList>
            <person name="Carninci P."/>
            <person name="Kasukawa T."/>
            <person name="Katayama S."/>
            <person name="Gough J."/>
            <person name="Frith M.C."/>
            <person name="Maeda N."/>
            <person name="Oyama R."/>
            <person name="Ravasi T."/>
            <person name="Lenhard B."/>
            <person name="Wells C."/>
            <person name="Kodzius R."/>
            <person name="Shimokawa K."/>
            <person name="Bajic V.B."/>
            <person name="Brenner S.E."/>
            <person name="Batalov S."/>
            <person name="Forrest A.R."/>
            <person name="Zavolan M."/>
            <person name="Davis M.J."/>
            <person name="Wilming L.G."/>
            <person name="Aidinis V."/>
            <person name="Allen J.E."/>
            <person name="Ambesi-Impiombato A."/>
            <person name="Apweiler R."/>
            <person name="Aturaliya R.N."/>
            <person name="Bailey T.L."/>
            <person name="Bansal M."/>
            <person name="Baxter L."/>
            <person name="Beisel K.W."/>
            <person name="Bersano T."/>
            <person name="Bono H."/>
            <person name="Chalk A.M."/>
            <person name="Chiu K.P."/>
            <person name="Choudhary V."/>
            <person name="Christoffels A."/>
            <person name="Clutterbuck D.R."/>
            <person name="Crowe M.L."/>
            <person name="Dalla E."/>
            <person name="Dalrymple B.P."/>
            <person name="de Bono B."/>
            <person name="Della Gatta G."/>
            <person name="di Bernardo D."/>
            <person name="Down T."/>
            <person name="Engstrom P."/>
            <person name="Fagiolini M."/>
            <person name="Faulkner G."/>
            <person name="Fletcher C.F."/>
            <person name="Fukushima T."/>
            <person name="Furuno M."/>
            <person name="Futaki S."/>
            <person name="Gariboldi M."/>
            <person name="Georgii-Hemming P."/>
            <person name="Gingeras T.R."/>
            <person name="Gojobori T."/>
            <person name="Green R.E."/>
            <person name="Gustincich S."/>
            <person name="Harbers M."/>
            <person name="Hayashi Y."/>
            <person name="Hensch T.K."/>
            <person name="Hirokawa N."/>
            <person name="Hill D."/>
            <person name="Huminiecki L."/>
            <person name="Iacono M."/>
            <person name="Ikeo K."/>
            <person name="Iwama A."/>
            <person name="Ishikawa T."/>
            <person name="Jakt M."/>
            <person name="Kanapin A."/>
            <person name="Katoh M."/>
            <person name="Kawasawa Y."/>
            <person name="Kelso J."/>
            <person name="Kitamura H."/>
            <person name="Kitano H."/>
            <person name="Kollias G."/>
            <person name="Krishnan S.P."/>
            <person name="Kruger A."/>
            <person name="Kummerfeld S.K."/>
            <person name="Kurochkin I.V."/>
            <person name="Lareau L.F."/>
            <person name="Lazarevic D."/>
            <person name="Lipovich L."/>
            <person name="Liu J."/>
            <person name="Liuni S."/>
            <person name="McWilliam S."/>
            <person name="Madan Babu M."/>
            <person name="Madera M."/>
            <person name="Marchionni L."/>
            <person name="Matsuda H."/>
            <person name="Matsuzawa S."/>
            <person name="Miki H."/>
            <person name="Mignone F."/>
            <person name="Miyake S."/>
            <person name="Morris K."/>
            <person name="Mottagui-Tabar S."/>
            <person name="Mulder N."/>
            <person name="Nakano N."/>
            <person name="Nakauchi H."/>
            <person name="Ng P."/>
            <person name="Nilsson R."/>
            <person name="Nishiguchi S."/>
            <person name="Nishikawa S."/>
            <person name="Nori F."/>
            <person name="Ohara O."/>
            <person name="Okazaki Y."/>
            <person name="Orlando V."/>
            <person name="Pang K.C."/>
            <person name="Pavan W.J."/>
            <person name="Pavesi G."/>
            <person name="Pesole G."/>
            <person name="Petrovsky N."/>
            <person name="Piazza S."/>
            <person name="Reed J."/>
            <person name="Reid J.F."/>
            <person name="Ring B.Z."/>
            <person name="Ringwald M."/>
            <person name="Rost B."/>
            <person name="Ruan Y."/>
            <person name="Salzberg S.L."/>
            <person name="Sandelin A."/>
            <person name="Schneider C."/>
            <person name="Schoenbach C."/>
            <person name="Sekiguchi K."/>
            <person name="Semple C.A."/>
            <person name="Seno S."/>
            <person name="Sessa L."/>
            <person name="Sheng Y."/>
            <person name="Shibata Y."/>
            <person name="Shimada H."/>
            <person name="Shimada K."/>
            <person name="Silva D."/>
            <person name="Sinclair B."/>
            <person name="Sperling S."/>
            <person name="Stupka E."/>
            <person name="Sugiura K."/>
            <person name="Sultana R."/>
            <person name="Takenaka Y."/>
            <person name="Taki K."/>
            <person name="Tammoja K."/>
            <person name="Tan S.L."/>
            <person name="Tang S."/>
            <person name="Taylor M.S."/>
            <person name="Tegner J."/>
            <person name="Teichmann S.A."/>
            <person name="Ueda H.R."/>
            <person name="van Nimwegen E."/>
            <person name="Verardo R."/>
            <person name="Wei C.L."/>
            <person name="Yagi K."/>
            <person name="Yamanishi H."/>
            <person name="Zabarovsky E."/>
            <person name="Zhu S."/>
            <person name="Zimmer A."/>
            <person name="Hide W."/>
            <person name="Bult C."/>
            <person name="Grimmond S.M."/>
            <person name="Teasdale R.D."/>
            <person name="Liu E.T."/>
            <person name="Brusic V."/>
            <person name="Quackenbush J."/>
            <person name="Wahlestedt C."/>
            <person name="Mattick J.S."/>
            <person name="Hume D.A."/>
            <person name="Kai C."/>
            <person name="Sasaki D."/>
            <person name="Tomaru Y."/>
            <person name="Fukuda S."/>
            <person name="Kanamori-Katayama M."/>
            <person name="Suzuki M."/>
            <person name="Aoki J."/>
            <person name="Arakawa T."/>
            <person name="Iida J."/>
            <person name="Imamura K."/>
            <person name="Itoh M."/>
            <person name="Kato T."/>
            <person name="Kawaji H."/>
            <person name="Kawagashira N."/>
            <person name="Kawashima T."/>
            <person name="Kojima M."/>
            <person name="Kondo S."/>
            <person name="Konno H."/>
            <person name="Nakano K."/>
            <person name="Ninomiya N."/>
            <person name="Nishio T."/>
            <person name="Okada M."/>
            <person name="Plessy C."/>
            <person name="Shibata K."/>
            <person name="Shiraki T."/>
            <person name="Suzuki S."/>
            <person name="Tagami M."/>
            <person name="Waki K."/>
            <person name="Watahiki A."/>
            <person name="Okamura-Oho Y."/>
            <person name="Suzuki H."/>
            <person name="Kawai J."/>
            <person name="Hayashizaki Y."/>
        </authorList>
    </citation>
    <scope>NUCLEOTIDE SEQUENCE [LARGE SCALE MRNA]</scope>
    <source>
        <strain>C57BL/6J</strain>
        <tissue>Embryo</tissue>
    </source>
</reference>
<reference key="2">
    <citation type="journal article" date="2004" name="Genome Res.">
        <title>The status, quality, and expansion of the NIH full-length cDNA project: the Mammalian Gene Collection (MGC).</title>
        <authorList>
            <consortium name="The MGC Project Team"/>
        </authorList>
    </citation>
    <scope>NUCLEOTIDE SEQUENCE [LARGE SCALE MRNA]</scope>
    <source>
        <strain>FVB/N</strain>
        <tissue>Mammary gland</tissue>
    </source>
</reference>
<reference key="3">
    <citation type="journal article" date="2010" name="Cell">
        <title>A tissue-specific atlas of mouse protein phosphorylation and expression.</title>
        <authorList>
            <person name="Huttlin E.L."/>
            <person name="Jedrychowski M.P."/>
            <person name="Elias J.E."/>
            <person name="Goswami T."/>
            <person name="Rad R."/>
            <person name="Beausoleil S.A."/>
            <person name="Villen J."/>
            <person name="Haas W."/>
            <person name="Sowa M.E."/>
            <person name="Gygi S.P."/>
        </authorList>
    </citation>
    <scope>IDENTIFICATION BY MASS SPECTROMETRY [LARGE SCALE ANALYSIS]</scope>
    <source>
        <tissue>Brain</tissue>
        <tissue>Brown adipose tissue</tissue>
        <tissue>Heart</tissue>
        <tissue>Kidney</tissue>
        <tissue>Liver</tissue>
        <tissue>Lung</tissue>
        <tissue>Pancreas</tissue>
        <tissue>Spleen</tissue>
        <tissue>Testis</tissue>
    </source>
</reference>
<name>RTRAF_MOUSE</name>
<proteinExistence type="evidence at protein level"/>
<comment type="function">
    <text evidence="2">RNA-binding protein involved in modulation of mRNA transcription by Polymerase II. Component of the tRNA-splicing ligase complex and is required for tRNA ligation. May be required for RNA transport.</text>
</comment>
<comment type="subunit">
    <text evidence="2">Homodimer. Interacts with FAM98A (via N- and C-terminus). Interacts with NIN; which may prevent phosphorylation of NIN. Interacts with POLR2A. Component of a tRNA-splicing ligase complex.</text>
</comment>
<comment type="subcellular location">
    <subcellularLocation>
        <location evidence="2">Nucleus</location>
    </subcellularLocation>
    <subcellularLocation>
        <location evidence="2">Cytoplasm</location>
        <location evidence="2">Cytosol</location>
    </subcellularLocation>
    <subcellularLocation>
        <location evidence="2">Cytoplasm</location>
        <location evidence="2">Perinuclear region</location>
    </subcellularLocation>
    <subcellularLocation>
        <location evidence="2">Cytoplasm</location>
        <location evidence="2">Cytoskeleton</location>
        <location evidence="2">Microtubule organizing center</location>
        <location evidence="2">Centrosome</location>
    </subcellularLocation>
    <text evidence="1">May localize at the centrosome during mitosis. Shuttles between the cytosol and the nucleus: enters into the nucleus in case of active transcription while it accumulates in cytosol when transcription level is low (By similarity).</text>
</comment>
<comment type="similarity">
    <text evidence="3">Belongs to the RTRAF family.</text>
</comment>
<protein>
    <recommendedName>
        <fullName evidence="4">RNA transcription, translation and transport factor protein</fullName>
    </recommendedName>
</protein>
<dbReference type="EMBL" id="AK003732">
    <property type="protein sequence ID" value="BAB22966.1"/>
    <property type="molecule type" value="mRNA"/>
</dbReference>
<dbReference type="EMBL" id="AK012460">
    <property type="protein sequence ID" value="BAB28255.1"/>
    <property type="molecule type" value="mRNA"/>
</dbReference>
<dbReference type="EMBL" id="AK012486">
    <property type="protein sequence ID" value="BAB28273.1"/>
    <property type="molecule type" value="mRNA"/>
</dbReference>
<dbReference type="EMBL" id="BC048357">
    <property type="protein sequence ID" value="AAH48357.1"/>
    <property type="molecule type" value="mRNA"/>
</dbReference>
<dbReference type="CCDS" id="CCDS26839.1"/>
<dbReference type="RefSeq" id="NP_080804.1">
    <property type="nucleotide sequence ID" value="NM_026528.3"/>
</dbReference>
<dbReference type="SMR" id="Q9CQE8"/>
<dbReference type="BioGRID" id="212624">
    <property type="interactions" value="47"/>
</dbReference>
<dbReference type="FunCoup" id="Q9CQE8">
    <property type="interactions" value="3740"/>
</dbReference>
<dbReference type="IntAct" id="Q9CQE8">
    <property type="interactions" value="6"/>
</dbReference>
<dbReference type="MINT" id="Q9CQE8"/>
<dbReference type="STRING" id="10090.ENSMUSP00000022341"/>
<dbReference type="GlyGen" id="Q9CQE8">
    <property type="glycosylation" value="1 site, 1 O-linked glycan (1 site)"/>
</dbReference>
<dbReference type="iPTMnet" id="Q9CQE8"/>
<dbReference type="PhosphoSitePlus" id="Q9CQE8"/>
<dbReference type="SwissPalm" id="Q9CQE8"/>
<dbReference type="REPRODUCTION-2DPAGE" id="Q9CQE8"/>
<dbReference type="jPOST" id="Q9CQE8"/>
<dbReference type="PaxDb" id="10090-ENSMUSP00000022341"/>
<dbReference type="ProteomicsDB" id="262725"/>
<dbReference type="Pumba" id="Q9CQE8"/>
<dbReference type="Antibodypedia" id="10723">
    <property type="antibodies" value="324 antibodies from 27 providers"/>
</dbReference>
<dbReference type="DNASU" id="68045"/>
<dbReference type="Ensembl" id="ENSMUST00000022341.7">
    <property type="protein sequence ID" value="ENSMUSP00000022341.6"/>
    <property type="gene ID" value="ENSMUSG00000021807.7"/>
</dbReference>
<dbReference type="GeneID" id="68045"/>
<dbReference type="KEGG" id="mmu:68045"/>
<dbReference type="UCSC" id="uc007siv.1">
    <property type="organism name" value="mouse"/>
</dbReference>
<dbReference type="AGR" id="MGI:1915295"/>
<dbReference type="CTD" id="51637"/>
<dbReference type="MGI" id="MGI:1915295">
    <property type="gene designation" value="Rtraf"/>
</dbReference>
<dbReference type="VEuPathDB" id="HostDB:ENSMUSG00000021807"/>
<dbReference type="eggNOG" id="KOG4380">
    <property type="taxonomic scope" value="Eukaryota"/>
</dbReference>
<dbReference type="GeneTree" id="ENSGT00390000005163"/>
<dbReference type="HOGENOM" id="CLU_075085_0_0_1"/>
<dbReference type="InParanoid" id="Q9CQE8"/>
<dbReference type="OMA" id="YPMRILR"/>
<dbReference type="OrthoDB" id="514167at2759"/>
<dbReference type="PhylomeDB" id="Q9CQE8"/>
<dbReference type="TreeFam" id="TF323606"/>
<dbReference type="BioGRID-ORCS" id="68045">
    <property type="hits" value="21 hits in 77 CRISPR screens"/>
</dbReference>
<dbReference type="PRO" id="PR:Q9CQE8"/>
<dbReference type="Proteomes" id="UP000000589">
    <property type="component" value="Chromosome 14"/>
</dbReference>
<dbReference type="RNAct" id="Q9CQE8">
    <property type="molecule type" value="protein"/>
</dbReference>
<dbReference type="Bgee" id="ENSMUSG00000021807">
    <property type="expression patterns" value="Expressed in bone fossa and 249 other cell types or tissues"/>
</dbReference>
<dbReference type="ExpressionAtlas" id="Q9CQE8">
    <property type="expression patterns" value="baseline and differential"/>
</dbReference>
<dbReference type="GO" id="GO:0005813">
    <property type="term" value="C:centrosome"/>
    <property type="evidence" value="ECO:0000250"/>
    <property type="project" value="UniProtKB"/>
</dbReference>
<dbReference type="GO" id="GO:0005737">
    <property type="term" value="C:cytoplasm"/>
    <property type="evidence" value="ECO:0000250"/>
    <property type="project" value="UniProtKB"/>
</dbReference>
<dbReference type="GO" id="GO:0005829">
    <property type="term" value="C:cytosol"/>
    <property type="evidence" value="ECO:0007669"/>
    <property type="project" value="UniProtKB-SubCell"/>
</dbReference>
<dbReference type="GO" id="GO:0072686">
    <property type="term" value="C:mitotic spindle"/>
    <property type="evidence" value="ECO:0000250"/>
    <property type="project" value="UniProtKB"/>
</dbReference>
<dbReference type="GO" id="GO:0005654">
    <property type="term" value="C:nucleoplasm"/>
    <property type="evidence" value="ECO:0007669"/>
    <property type="project" value="Ensembl"/>
</dbReference>
<dbReference type="GO" id="GO:0005634">
    <property type="term" value="C:nucleus"/>
    <property type="evidence" value="ECO:0000250"/>
    <property type="project" value="UniProtKB"/>
</dbReference>
<dbReference type="GO" id="GO:0048471">
    <property type="term" value="C:perinuclear region of cytoplasm"/>
    <property type="evidence" value="ECO:0000250"/>
    <property type="project" value="UniProtKB"/>
</dbReference>
<dbReference type="GO" id="GO:0072669">
    <property type="term" value="C:tRNA-splicing ligase complex"/>
    <property type="evidence" value="ECO:0000250"/>
    <property type="project" value="UniProtKB"/>
</dbReference>
<dbReference type="GO" id="GO:0042802">
    <property type="term" value="F:identical protein binding"/>
    <property type="evidence" value="ECO:0007669"/>
    <property type="project" value="Ensembl"/>
</dbReference>
<dbReference type="GO" id="GO:0003723">
    <property type="term" value="F:RNA binding"/>
    <property type="evidence" value="ECO:0000250"/>
    <property type="project" value="UniProtKB"/>
</dbReference>
<dbReference type="GO" id="GO:0000993">
    <property type="term" value="F:RNA polymerase II complex binding"/>
    <property type="evidence" value="ECO:0000250"/>
    <property type="project" value="UniProtKB"/>
</dbReference>
<dbReference type="GO" id="GO:0006469">
    <property type="term" value="P:negative regulation of protein kinase activity"/>
    <property type="evidence" value="ECO:0000250"/>
    <property type="project" value="UniProtKB"/>
</dbReference>
<dbReference type="GO" id="GO:0045944">
    <property type="term" value="P:positive regulation of transcription by RNA polymerase II"/>
    <property type="evidence" value="ECO:0000250"/>
    <property type="project" value="UniProtKB"/>
</dbReference>
<dbReference type="GO" id="GO:0006388">
    <property type="term" value="P:tRNA splicing, via endonucleolytic cleavage and ligation"/>
    <property type="evidence" value="ECO:0000250"/>
    <property type="project" value="UniProtKB"/>
</dbReference>
<dbReference type="InterPro" id="IPR019265">
    <property type="entry name" value="RTRAF"/>
</dbReference>
<dbReference type="PANTHER" id="PTHR15924">
    <property type="entry name" value="CLE"/>
    <property type="match status" value="1"/>
</dbReference>
<dbReference type="Pfam" id="PF10036">
    <property type="entry name" value="RLL"/>
    <property type="match status" value="1"/>
</dbReference>
<accession>Q9CQE8</accession>